<reference key="1">
    <citation type="journal article" date="2009" name="PLoS Biol.">
        <title>Lineage-specific biology revealed by a finished genome assembly of the mouse.</title>
        <authorList>
            <person name="Church D.M."/>
            <person name="Goodstadt L."/>
            <person name="Hillier L.W."/>
            <person name="Zody M.C."/>
            <person name="Goldstein S."/>
            <person name="She X."/>
            <person name="Bult C.J."/>
            <person name="Agarwala R."/>
            <person name="Cherry J.L."/>
            <person name="DiCuccio M."/>
            <person name="Hlavina W."/>
            <person name="Kapustin Y."/>
            <person name="Meric P."/>
            <person name="Maglott D."/>
            <person name="Birtle Z."/>
            <person name="Marques A.C."/>
            <person name="Graves T."/>
            <person name="Zhou S."/>
            <person name="Teague B."/>
            <person name="Potamousis K."/>
            <person name="Churas C."/>
            <person name="Place M."/>
            <person name="Herschleb J."/>
            <person name="Runnheim R."/>
            <person name="Forrest D."/>
            <person name="Amos-Landgraf J."/>
            <person name="Schwartz D.C."/>
            <person name="Cheng Z."/>
            <person name="Lindblad-Toh K."/>
            <person name="Eichler E.E."/>
            <person name="Ponting C.P."/>
        </authorList>
    </citation>
    <scope>NUCLEOTIDE SEQUENCE [LARGE SCALE GENOMIC DNA]</scope>
    <source>
        <strain>C57BL/6J</strain>
    </source>
</reference>
<reference key="2">
    <citation type="journal article" date="2005" name="Science">
        <title>The transcriptional landscape of the mammalian genome.</title>
        <authorList>
            <person name="Carninci P."/>
            <person name="Kasukawa T."/>
            <person name="Katayama S."/>
            <person name="Gough J."/>
            <person name="Frith M.C."/>
            <person name="Maeda N."/>
            <person name="Oyama R."/>
            <person name="Ravasi T."/>
            <person name="Lenhard B."/>
            <person name="Wells C."/>
            <person name="Kodzius R."/>
            <person name="Shimokawa K."/>
            <person name="Bajic V.B."/>
            <person name="Brenner S.E."/>
            <person name="Batalov S."/>
            <person name="Forrest A.R."/>
            <person name="Zavolan M."/>
            <person name="Davis M.J."/>
            <person name="Wilming L.G."/>
            <person name="Aidinis V."/>
            <person name="Allen J.E."/>
            <person name="Ambesi-Impiombato A."/>
            <person name="Apweiler R."/>
            <person name="Aturaliya R.N."/>
            <person name="Bailey T.L."/>
            <person name="Bansal M."/>
            <person name="Baxter L."/>
            <person name="Beisel K.W."/>
            <person name="Bersano T."/>
            <person name="Bono H."/>
            <person name="Chalk A.M."/>
            <person name="Chiu K.P."/>
            <person name="Choudhary V."/>
            <person name="Christoffels A."/>
            <person name="Clutterbuck D.R."/>
            <person name="Crowe M.L."/>
            <person name="Dalla E."/>
            <person name="Dalrymple B.P."/>
            <person name="de Bono B."/>
            <person name="Della Gatta G."/>
            <person name="di Bernardo D."/>
            <person name="Down T."/>
            <person name="Engstrom P."/>
            <person name="Fagiolini M."/>
            <person name="Faulkner G."/>
            <person name="Fletcher C.F."/>
            <person name="Fukushima T."/>
            <person name="Furuno M."/>
            <person name="Futaki S."/>
            <person name="Gariboldi M."/>
            <person name="Georgii-Hemming P."/>
            <person name="Gingeras T.R."/>
            <person name="Gojobori T."/>
            <person name="Green R.E."/>
            <person name="Gustincich S."/>
            <person name="Harbers M."/>
            <person name="Hayashi Y."/>
            <person name="Hensch T.K."/>
            <person name="Hirokawa N."/>
            <person name="Hill D."/>
            <person name="Huminiecki L."/>
            <person name="Iacono M."/>
            <person name="Ikeo K."/>
            <person name="Iwama A."/>
            <person name="Ishikawa T."/>
            <person name="Jakt M."/>
            <person name="Kanapin A."/>
            <person name="Katoh M."/>
            <person name="Kawasawa Y."/>
            <person name="Kelso J."/>
            <person name="Kitamura H."/>
            <person name="Kitano H."/>
            <person name="Kollias G."/>
            <person name="Krishnan S.P."/>
            <person name="Kruger A."/>
            <person name="Kummerfeld S.K."/>
            <person name="Kurochkin I.V."/>
            <person name="Lareau L.F."/>
            <person name="Lazarevic D."/>
            <person name="Lipovich L."/>
            <person name="Liu J."/>
            <person name="Liuni S."/>
            <person name="McWilliam S."/>
            <person name="Madan Babu M."/>
            <person name="Madera M."/>
            <person name="Marchionni L."/>
            <person name="Matsuda H."/>
            <person name="Matsuzawa S."/>
            <person name="Miki H."/>
            <person name="Mignone F."/>
            <person name="Miyake S."/>
            <person name="Morris K."/>
            <person name="Mottagui-Tabar S."/>
            <person name="Mulder N."/>
            <person name="Nakano N."/>
            <person name="Nakauchi H."/>
            <person name="Ng P."/>
            <person name="Nilsson R."/>
            <person name="Nishiguchi S."/>
            <person name="Nishikawa S."/>
            <person name="Nori F."/>
            <person name="Ohara O."/>
            <person name="Okazaki Y."/>
            <person name="Orlando V."/>
            <person name="Pang K.C."/>
            <person name="Pavan W.J."/>
            <person name="Pavesi G."/>
            <person name="Pesole G."/>
            <person name="Petrovsky N."/>
            <person name="Piazza S."/>
            <person name="Reed J."/>
            <person name="Reid J.F."/>
            <person name="Ring B.Z."/>
            <person name="Ringwald M."/>
            <person name="Rost B."/>
            <person name="Ruan Y."/>
            <person name="Salzberg S.L."/>
            <person name="Sandelin A."/>
            <person name="Schneider C."/>
            <person name="Schoenbach C."/>
            <person name="Sekiguchi K."/>
            <person name="Semple C.A."/>
            <person name="Seno S."/>
            <person name="Sessa L."/>
            <person name="Sheng Y."/>
            <person name="Shibata Y."/>
            <person name="Shimada H."/>
            <person name="Shimada K."/>
            <person name="Silva D."/>
            <person name="Sinclair B."/>
            <person name="Sperling S."/>
            <person name="Stupka E."/>
            <person name="Sugiura K."/>
            <person name="Sultana R."/>
            <person name="Takenaka Y."/>
            <person name="Taki K."/>
            <person name="Tammoja K."/>
            <person name="Tan S.L."/>
            <person name="Tang S."/>
            <person name="Taylor M.S."/>
            <person name="Tegner J."/>
            <person name="Teichmann S.A."/>
            <person name="Ueda H.R."/>
            <person name="van Nimwegen E."/>
            <person name="Verardo R."/>
            <person name="Wei C.L."/>
            <person name="Yagi K."/>
            <person name="Yamanishi H."/>
            <person name="Zabarovsky E."/>
            <person name="Zhu S."/>
            <person name="Zimmer A."/>
            <person name="Hide W."/>
            <person name="Bult C."/>
            <person name="Grimmond S.M."/>
            <person name="Teasdale R.D."/>
            <person name="Liu E.T."/>
            <person name="Brusic V."/>
            <person name="Quackenbush J."/>
            <person name="Wahlestedt C."/>
            <person name="Mattick J.S."/>
            <person name="Hume D.A."/>
            <person name="Kai C."/>
            <person name="Sasaki D."/>
            <person name="Tomaru Y."/>
            <person name="Fukuda S."/>
            <person name="Kanamori-Katayama M."/>
            <person name="Suzuki M."/>
            <person name="Aoki J."/>
            <person name="Arakawa T."/>
            <person name="Iida J."/>
            <person name="Imamura K."/>
            <person name="Itoh M."/>
            <person name="Kato T."/>
            <person name="Kawaji H."/>
            <person name="Kawagashira N."/>
            <person name="Kawashima T."/>
            <person name="Kojima M."/>
            <person name="Kondo S."/>
            <person name="Konno H."/>
            <person name="Nakano K."/>
            <person name="Ninomiya N."/>
            <person name="Nishio T."/>
            <person name="Okada M."/>
            <person name="Plessy C."/>
            <person name="Shibata K."/>
            <person name="Shiraki T."/>
            <person name="Suzuki S."/>
            <person name="Tagami M."/>
            <person name="Waki K."/>
            <person name="Watahiki A."/>
            <person name="Okamura-Oho Y."/>
            <person name="Suzuki H."/>
            <person name="Kawai J."/>
            <person name="Hayashizaki Y."/>
        </authorList>
    </citation>
    <scope>NUCLEOTIDE SEQUENCE [LARGE SCALE MRNA] OF 1-1010</scope>
    <source>
        <strain>C57BL/6J</strain>
        <tissue>Cerebellum</tissue>
        <tissue>Ovary</tissue>
        <tissue>Spinal cord</tissue>
        <tissue>Vagina</tissue>
    </source>
</reference>
<reference key="3">
    <citation type="journal article" date="2001" name="EMBO J.">
        <title>Activation of AML1-mediated transcription by MOZ and inhibition by the MOZ-CBP fusion protein.</title>
        <authorList>
            <person name="Kitabayashi I."/>
            <person name="Aikawa Y."/>
            <person name="Nguyen L.A."/>
            <person name="Yokoyama A."/>
            <person name="Ohki M."/>
        </authorList>
    </citation>
    <scope>INTERACTION WITH RUNX1</scope>
    <scope>FUNCTION</scope>
    <scope>IDENTIFICATION BY MASS SPECTROMETRY</scope>
</reference>
<reference key="4">
    <citation type="journal article" date="2009" name="Immunity">
        <title>The phagosomal proteome in interferon-gamma-activated macrophages.</title>
        <authorList>
            <person name="Trost M."/>
            <person name="English L."/>
            <person name="Lemieux S."/>
            <person name="Courcelles M."/>
            <person name="Desjardins M."/>
            <person name="Thibault P."/>
        </authorList>
    </citation>
    <scope>IDENTIFICATION BY MASS SPECTROMETRY [LARGE SCALE ANALYSIS]</scope>
</reference>
<reference key="5">
    <citation type="journal article" date="2010" name="Cell">
        <title>A tissue-specific atlas of mouse protein phosphorylation and expression.</title>
        <authorList>
            <person name="Huttlin E.L."/>
            <person name="Jedrychowski M.P."/>
            <person name="Elias J.E."/>
            <person name="Goswami T."/>
            <person name="Rad R."/>
            <person name="Beausoleil S.A."/>
            <person name="Villen J."/>
            <person name="Haas W."/>
            <person name="Sowa M.E."/>
            <person name="Gygi S.P."/>
        </authorList>
    </citation>
    <scope>PHOSPHORYLATION [LARGE SCALE ANALYSIS] AT SER-786</scope>
    <scope>IDENTIFICATION BY MASS SPECTROMETRY [LARGE SCALE ANALYSIS]</scope>
    <source>
        <tissue>Kidney</tissue>
        <tissue>Spleen</tissue>
    </source>
</reference>
<reference key="6">
    <citation type="journal article" date="2013" name="Mol. Cell">
        <title>SIRT5-mediated lysine desuccinylation impacts diverse metabolic pathways.</title>
        <authorList>
            <person name="Park J."/>
            <person name="Chen Y."/>
            <person name="Tishkoff D.X."/>
            <person name="Peng C."/>
            <person name="Tan M."/>
            <person name="Dai L."/>
            <person name="Xie Z."/>
            <person name="Zhang Y."/>
            <person name="Zwaans B.M."/>
            <person name="Skinner M.E."/>
            <person name="Lombard D.B."/>
            <person name="Zhao Y."/>
        </authorList>
    </citation>
    <scope>ACETYLATION [LARGE SCALE ANALYSIS] AT LYS-172; LYS-813 AND LYS-816</scope>
    <scope>IDENTIFICATION BY MASS SPECTROMETRY [LARGE SCALE ANALYSIS]</scope>
    <source>
        <tissue>Embryonic fibroblast</tissue>
    </source>
</reference>
<accession>Q8BZ21</accession>
<accession>Q8BW52</accession>
<accession>Q8BYH1</accession>
<accession>Q8C1F3</accession>
<feature type="chain" id="PRO_0000051573" description="Histone acetyltransferase KAT6A">
    <location>
        <begin position="1"/>
        <end position="2003"/>
    </location>
</feature>
<feature type="domain" description="SAMD1-like winged helix (WH)" evidence="8">
    <location>
        <begin position="1"/>
        <end position="77"/>
    </location>
</feature>
<feature type="domain" description="H15" evidence="6">
    <location>
        <begin position="95"/>
        <end position="171"/>
    </location>
</feature>
<feature type="domain" description="MYST-type HAT" evidence="7">
    <location>
        <begin position="503"/>
        <end position="777"/>
    </location>
</feature>
<feature type="zinc finger region" description="PHD-type 1" evidence="5">
    <location>
        <begin position="206"/>
        <end position="265"/>
    </location>
</feature>
<feature type="zinc finger region" description="PHD-type 2" evidence="5">
    <location>
        <begin position="262"/>
        <end position="313"/>
    </location>
</feature>
<feature type="zinc finger region" description="C2HC MYST-type" evidence="7">
    <location>
        <begin position="536"/>
        <end position="561"/>
    </location>
</feature>
<feature type="region of interest" description="Required for activation of RUNX1-1" evidence="3">
    <location>
        <begin position="1"/>
        <end position="144"/>
    </location>
</feature>
<feature type="region of interest" description="Required for nuclear localization" evidence="1">
    <location>
        <begin position="52"/>
        <end position="166"/>
    </location>
</feature>
<feature type="region of interest" description="Interaction with PML" evidence="1">
    <location>
        <begin position="144"/>
        <end position="663"/>
    </location>
</feature>
<feature type="region of interest" description="Interaction with RUNX1-1" evidence="1">
    <location>
        <begin position="312"/>
        <end position="663"/>
    </location>
</feature>
<feature type="region of interest" description="Disordered" evidence="9">
    <location>
        <begin position="336"/>
        <end position="377"/>
    </location>
</feature>
<feature type="region of interest" description="Disordered" evidence="9">
    <location>
        <begin position="439"/>
        <end position="466"/>
    </location>
</feature>
<feature type="region of interest" description="Catalytic" evidence="1">
    <location>
        <begin position="487"/>
        <end position="777"/>
    </location>
</feature>
<feature type="region of interest" description="Mediates interaction with BRPF1, required for histone H3 acetyltransferase activity" evidence="1">
    <location>
        <begin position="506"/>
        <end position="809"/>
    </location>
</feature>
<feature type="region of interest" description="Disordered" evidence="9">
    <location>
        <begin position="784"/>
        <end position="939"/>
    </location>
</feature>
<feature type="region of interest" description="Disordered" evidence="9">
    <location>
        <begin position="983"/>
        <end position="1083"/>
    </location>
</feature>
<feature type="region of interest" description="Disordered" evidence="9">
    <location>
        <begin position="1096"/>
        <end position="1174"/>
    </location>
</feature>
<feature type="region of interest" description="Disordered" evidence="9">
    <location>
        <begin position="1197"/>
        <end position="1438"/>
    </location>
</feature>
<feature type="region of interest" description="Disordered" evidence="9">
    <location>
        <begin position="1455"/>
        <end position="1533"/>
    </location>
</feature>
<feature type="region of interest" description="Interaction with PML" evidence="1">
    <location>
        <begin position="1511"/>
        <end position="1740"/>
    </location>
</feature>
<feature type="region of interest" description="Interaction with RUNX1-2" evidence="1">
    <location>
        <begin position="1511"/>
        <end position="1636"/>
    </location>
</feature>
<feature type="region of interest" description="Disordered" evidence="9">
    <location>
        <begin position="1546"/>
        <end position="1568"/>
    </location>
</feature>
<feature type="region of interest" description="Disordered" evidence="9">
    <location>
        <begin position="1631"/>
        <end position="1707"/>
    </location>
</feature>
<feature type="region of interest" description="Required for activation of RUNX1-2" evidence="1">
    <location>
        <begin position="1912"/>
        <end position="1947"/>
    </location>
</feature>
<feature type="compositionally biased region" description="Polar residues" evidence="9">
    <location>
        <begin position="445"/>
        <end position="458"/>
    </location>
</feature>
<feature type="compositionally biased region" description="Acidic residues" evidence="9">
    <location>
        <begin position="786"/>
        <end position="798"/>
    </location>
</feature>
<feature type="compositionally biased region" description="Basic and acidic residues" evidence="9">
    <location>
        <begin position="799"/>
        <end position="841"/>
    </location>
</feature>
<feature type="compositionally biased region" description="Basic residues" evidence="9">
    <location>
        <begin position="866"/>
        <end position="875"/>
    </location>
</feature>
<feature type="compositionally biased region" description="Basic and acidic residues" evidence="9">
    <location>
        <begin position="876"/>
        <end position="890"/>
    </location>
</feature>
<feature type="compositionally biased region" description="Basic and acidic residues" evidence="9">
    <location>
        <begin position="904"/>
        <end position="917"/>
    </location>
</feature>
<feature type="compositionally biased region" description="Basic residues" evidence="9">
    <location>
        <begin position="1009"/>
        <end position="1030"/>
    </location>
</feature>
<feature type="compositionally biased region" description="Low complexity" evidence="9">
    <location>
        <begin position="1031"/>
        <end position="1042"/>
    </location>
</feature>
<feature type="compositionally biased region" description="Acidic residues" evidence="9">
    <location>
        <begin position="1043"/>
        <end position="1053"/>
    </location>
</feature>
<feature type="compositionally biased region" description="Acidic residues" evidence="9">
    <location>
        <begin position="1065"/>
        <end position="1079"/>
    </location>
</feature>
<feature type="compositionally biased region" description="Acidic residues" evidence="9">
    <location>
        <begin position="1107"/>
        <end position="1120"/>
    </location>
</feature>
<feature type="compositionally biased region" description="Polar residues" evidence="9">
    <location>
        <begin position="1136"/>
        <end position="1147"/>
    </location>
</feature>
<feature type="compositionally biased region" description="Basic residues" evidence="9">
    <location>
        <begin position="1148"/>
        <end position="1174"/>
    </location>
</feature>
<feature type="compositionally biased region" description="Basic and acidic residues" evidence="9">
    <location>
        <begin position="1204"/>
        <end position="1229"/>
    </location>
</feature>
<feature type="compositionally biased region" description="Acidic residues" evidence="9">
    <location>
        <begin position="1230"/>
        <end position="1241"/>
    </location>
</feature>
<feature type="compositionally biased region" description="Acidic residues" evidence="9">
    <location>
        <begin position="1282"/>
        <end position="1299"/>
    </location>
</feature>
<feature type="compositionally biased region" description="Basic and acidic residues" evidence="9">
    <location>
        <begin position="1317"/>
        <end position="1334"/>
    </location>
</feature>
<feature type="compositionally biased region" description="Basic and acidic residues" evidence="9">
    <location>
        <begin position="1352"/>
        <end position="1361"/>
    </location>
</feature>
<feature type="compositionally biased region" description="Basic and acidic residues" evidence="9">
    <location>
        <begin position="1393"/>
        <end position="1414"/>
    </location>
</feature>
<feature type="compositionally biased region" description="Low complexity" evidence="9">
    <location>
        <begin position="1473"/>
        <end position="1490"/>
    </location>
</feature>
<feature type="compositionally biased region" description="Polar residues" evidence="9">
    <location>
        <begin position="1502"/>
        <end position="1523"/>
    </location>
</feature>
<feature type="compositionally biased region" description="Polar residues" evidence="9">
    <location>
        <begin position="1550"/>
        <end position="1568"/>
    </location>
</feature>
<feature type="compositionally biased region" description="Pro residues" evidence="9">
    <location>
        <begin position="1640"/>
        <end position="1673"/>
    </location>
</feature>
<feature type="compositionally biased region" description="Pro residues" evidence="9">
    <location>
        <begin position="1682"/>
        <end position="1698"/>
    </location>
</feature>
<feature type="active site" description="Proton donor/acceptor" evidence="4">
    <location>
        <position position="679"/>
    </location>
</feature>
<feature type="binding site" evidence="3">
    <location>
        <begin position="644"/>
        <end position="648"/>
    </location>
    <ligand>
        <name>acetyl-CoA</name>
        <dbReference type="ChEBI" id="CHEBI:57288"/>
    </ligand>
</feature>
<feature type="binding site" evidence="3">
    <location>
        <begin position="653"/>
        <end position="659"/>
    </location>
    <ligand>
        <name>acetyl-CoA</name>
        <dbReference type="ChEBI" id="CHEBI:57288"/>
    </ligand>
</feature>
<feature type="binding site" evidence="3">
    <location>
        <position position="683"/>
    </location>
    <ligand>
        <name>acetyl-CoA</name>
        <dbReference type="ChEBI" id="CHEBI:57288"/>
    </ligand>
</feature>
<feature type="modified residue" description="N6-acetyllysine" evidence="13">
    <location>
        <position position="172"/>
    </location>
</feature>
<feature type="modified residue" description="N6-acetyllysine" evidence="3">
    <location>
        <position position="350"/>
    </location>
</feature>
<feature type="modified residue" description="N6-acetyllysine" evidence="3">
    <location>
        <position position="355"/>
    </location>
</feature>
<feature type="modified residue" description="Phosphothreonine; by PKB/AKT1" evidence="3">
    <location>
        <position position="369"/>
    </location>
</feature>
<feature type="modified residue" description="Phosphoserine" evidence="3">
    <location>
        <position position="419"/>
    </location>
</feature>
<feature type="modified residue" description="Phosphoserine" evidence="3">
    <location>
        <position position="472"/>
    </location>
</feature>
<feature type="modified residue" description="N6-acetyllysine; by autocatalysis" evidence="3">
    <location>
        <position position="603"/>
    </location>
</feature>
<feature type="modified residue" description="Phosphoserine" evidence="12">
    <location>
        <position position="786"/>
    </location>
</feature>
<feature type="modified residue" description="N6-acetyllysine" evidence="13">
    <location>
        <position position="813"/>
    </location>
</feature>
<feature type="modified residue" description="N6-acetyllysine" evidence="13">
    <location>
        <position position="816"/>
    </location>
</feature>
<feature type="modified residue" description="Phosphotyrosine" evidence="2">
    <location>
        <position position="901"/>
    </location>
</feature>
<feature type="modified residue" description="Phosphoserine" evidence="3">
    <location>
        <position position="941"/>
    </location>
</feature>
<feature type="modified residue" description="Phosphoserine" evidence="3">
    <location>
        <position position="954"/>
    </location>
</feature>
<feature type="modified residue" description="N6-acetyllysine" evidence="3">
    <location>
        <position position="1007"/>
    </location>
</feature>
<feature type="modified residue" description="Phosphoserine" evidence="3">
    <location>
        <position position="1090"/>
    </location>
</feature>
<feature type="modified residue" description="Phosphoserine" evidence="3">
    <location>
        <position position="1091"/>
    </location>
</feature>
<feature type="modified residue" description="Phosphoserine" evidence="3">
    <location>
        <position position="1115"/>
    </location>
</feature>
<feature type="cross-link" description="Glycyl lysine isopeptide (Lys-Gly) (interchain with G-Cter in SUMO2)" evidence="3">
    <location>
        <position position="836"/>
    </location>
</feature>
<feature type="cross-link" description="Glycyl lysine isopeptide (Lys-Gly) (interchain with G-Cter in SUMO2)" evidence="3">
    <location>
        <position position="1336"/>
    </location>
</feature>
<organism>
    <name type="scientific">Mus musculus</name>
    <name type="common">Mouse</name>
    <dbReference type="NCBI Taxonomy" id="10090"/>
    <lineage>
        <taxon>Eukaryota</taxon>
        <taxon>Metazoa</taxon>
        <taxon>Chordata</taxon>
        <taxon>Craniata</taxon>
        <taxon>Vertebrata</taxon>
        <taxon>Euteleostomi</taxon>
        <taxon>Mammalia</taxon>
        <taxon>Eutheria</taxon>
        <taxon>Euarchontoglires</taxon>
        <taxon>Glires</taxon>
        <taxon>Rodentia</taxon>
        <taxon>Myomorpha</taxon>
        <taxon>Muroidea</taxon>
        <taxon>Muridae</taxon>
        <taxon>Murinae</taxon>
        <taxon>Mus</taxon>
        <taxon>Mus</taxon>
    </lineage>
</organism>
<gene>
    <name type="primary">Kat6a</name>
    <name type="synonym">Moz</name>
    <name type="synonym">Myst3</name>
</gene>
<sequence>MVKLANPLYTEWILEAIKKVKKQKQRPSEERICNAVSSSHGLDRRTVLEQLELSVKDGTILKVSNKGLNSYKDPDNPGRIALPKPRNHGKLDTKQSVDWNKLLKRAFEGLAETGGSTLKSIERFLKSQKDVSAACGGSAAPGFHQQLRLAIKRAVGHGRLLKDGPLYRLNTKAASAEGKEGCESLSCLPPVSLLPHEKDKPVAEPIPICSFCLGTKEQNREKQPEELVSCADCGNSGHPSCLKFSPELTVRVKALRWQCIECKTCSSCRDQGKNADNMLFCDSCDRGFHMECCDPPLTRMPKGMWICQICRPRKKGRKLLQKKAAQIKRRYANPIGRPKNRLKKQNTVSKGPFSKVRTGPGRGRKRKITVSSQSASSSEEGYLERIDGLDFCRDSNAPLKFNKKTKGLIDGLTKFFTPSPDGRKARGEVVDYSEQYRIRKKGNRKSSTSDWPTDNQDGWESKQENEERLFGSQEIMTERDMELFRDIQEQALQKVGVTGPPDPQVRCPSVIEFGKYEIHTWYSSPYPQEYSRLPKLYLCEFCLKYMKSRTILQQHMKKCGWFHPPANEIYRKNNISVFEVDGNVSTIYCQNLCLLAKLFLDHKTLYYDVEPFLFYVLTQNDVKGCHLVGYFSKEKHCQQKYNVSCIMILPQYQRKGYGRFLIDFSYLLSKREGQAGSPEKPLSDLGRLSYMAYWKSVILECLYHQNDKQISIKKLSKLTGVCPQDITSTLHHLRMLDFRSDQFVIIRREKLIQDHMAKLQLNLRPVDVDPECLRWTPVIVSNSVVSEDEDEEADEGEKEEPQGQERELETRVKVGKSVSREKKDQESSSLIETDKKPEVKELASSSRLSKQALPRDSLPANSQPPRRGRCGRKNRKTQERFGDKDSKMLVDETLSASQEQYGDCEEKSETSQERFTEMEEQLAAPQVQADGKPDIPKGRFSESVELWRGQLKKSPETLKCRLPEGNDRLPCCYTDGDRAFFRGFSESSEEEEEPESPRSNSPPILTKPTLKRKKPILHRRRRVRKRKHHNSSVVTETISETTEVLDEPFEDSDSERPMPRLEPTFEMEEEEEEEEEESELFPRGYFHCLSSQDILRCQSSSKRPSKEEEEEEEESDDADDTPVLKPVSLLRKCDVNSASLEPDTSTPMKKKKGWPKGKSRKPIHWKKRPGRKPGFKLNQEIIAASAQECIVEPVVPIKPGRKPRTQENEEIVEVKEDLLEERKEEMHTEPDEEAEEEEDTTSSDIRAMSPLDSSNSPEAEPKEPEPEEEDEKPSDDQRQSEEEPQELEEQEQEEEDEVTTEANQNEDHDADDEDEGHLDSLKTKEPEEQPAREDDKEEPGIQGSFLAANMQDSRENTKDKDEAEPDSEEDQPSHEASVVSETMPGSEEDHEEDSNTKEELIELKEEEEIPHSELDLETVQAVQSLTQEESSEHEGAYQDCEETLAACQTLQSYTHTDEDPQMSMVEDCHASEHNSPISSIPSHPSQSVRSVNSPSMPALESGYTQISPEQGSLSAPSMQNMETSPMMDVPSVSDHSQQVVDSGFSDLGSIESTTENYENPSSYDSTMGSSICGNNSSQSSCSYGGLSSSSSLTQNSCVVTQQMANMGNSCSMLQQNTVQPAANCNIKSPQTCVVERPPSNQQPPPPPPPPPPPQQPQPPPQQQAAPQPPPPQPQQQQQQQQQPPPPQQQPQPPPPQQQPPLSQCSMNNSFTAAPMIMEIPESGSTGNISIYERIPGDFGAGSYSQPSATFSLAKLQQLTNTIMDPHAMPYSHSPAVTSYATSVSLSNTGLAQLAPSHPLAGTPQAQATMTPPPNLASTTMNLTSPLLQCNMSATNIGIPHTQRLQGQMPVKGHISIRSKSAPLPSATAHQQQLYGRSPPAVAMQAGPRALAVQRGMNMGVNLMPTPAYNVNSMNMNTLNAMNSYRMTQPMMNSSYHSNPAYMNQTAQYPMQMQMGMMGSQAYTQQPMQPNPHGNMMYTGPSHHSYMNAAGVPKQSLNGPYMRR</sequence>
<evidence type="ECO:0000250" key="1"/>
<evidence type="ECO:0000250" key="2">
    <source>
        <dbReference type="UniProtKB" id="Q5TKR9"/>
    </source>
</evidence>
<evidence type="ECO:0000250" key="3">
    <source>
        <dbReference type="UniProtKB" id="Q92794"/>
    </source>
</evidence>
<evidence type="ECO:0000250" key="4">
    <source>
        <dbReference type="UniProtKB" id="Q9H7Z6"/>
    </source>
</evidence>
<evidence type="ECO:0000255" key="5">
    <source>
        <dbReference type="PROSITE-ProRule" id="PRU00146"/>
    </source>
</evidence>
<evidence type="ECO:0000255" key="6">
    <source>
        <dbReference type="PROSITE-ProRule" id="PRU00837"/>
    </source>
</evidence>
<evidence type="ECO:0000255" key="7">
    <source>
        <dbReference type="PROSITE-ProRule" id="PRU01063"/>
    </source>
</evidence>
<evidence type="ECO:0000255" key="8">
    <source>
        <dbReference type="PROSITE-ProRule" id="PRU01358"/>
    </source>
</evidence>
<evidence type="ECO:0000256" key="9">
    <source>
        <dbReference type="SAM" id="MobiDB-lite"/>
    </source>
</evidence>
<evidence type="ECO:0000269" key="10">
    <source>
    </source>
</evidence>
<evidence type="ECO:0000305" key="11"/>
<evidence type="ECO:0007744" key="12">
    <source>
    </source>
</evidence>
<evidence type="ECO:0007744" key="13">
    <source>
    </source>
</evidence>
<keyword id="KW-0007">Acetylation</keyword>
<keyword id="KW-0010">Activator</keyword>
<keyword id="KW-0012">Acyltransferase</keyword>
<keyword id="KW-0156">Chromatin regulator</keyword>
<keyword id="KW-1017">Isopeptide bond</keyword>
<keyword id="KW-0479">Metal-binding</keyword>
<keyword id="KW-0539">Nucleus</keyword>
<keyword id="KW-0597">Phosphoprotein</keyword>
<keyword id="KW-1185">Reference proteome</keyword>
<keyword id="KW-0677">Repeat</keyword>
<keyword id="KW-0678">Repressor</keyword>
<keyword id="KW-0804">Transcription</keyword>
<keyword id="KW-0805">Transcription regulation</keyword>
<keyword id="KW-0808">Transferase</keyword>
<keyword id="KW-0832">Ubl conjugation</keyword>
<keyword id="KW-0862">Zinc</keyword>
<keyword id="KW-0863">Zinc-finger</keyword>
<proteinExistence type="evidence at protein level"/>
<protein>
    <recommendedName>
        <fullName>Histone acetyltransferase KAT6A</fullName>
        <ecNumber evidence="3">2.3.1.48</ecNumber>
    </recommendedName>
    <alternativeName>
        <fullName>MOZ, YBF2/SAS3, SAS2 and TIP60 protein 3</fullName>
        <shortName>MYST-3</shortName>
    </alternativeName>
    <alternativeName>
        <fullName>Monocytic leukemia zinc finger homolog</fullName>
    </alternativeName>
    <alternativeName>
        <fullName>Monocytic leukemia zinc finger protein</fullName>
    </alternativeName>
</protein>
<dbReference type="EC" id="2.3.1.48" evidence="3"/>
<dbReference type="EMBL" id="AC115361">
    <property type="status" value="NOT_ANNOTATED_CDS"/>
    <property type="molecule type" value="Genomic_DNA"/>
</dbReference>
<dbReference type="EMBL" id="AK028058">
    <property type="protein sequence ID" value="BAC25728.1"/>
    <property type="molecule type" value="mRNA"/>
</dbReference>
<dbReference type="EMBL" id="AK036885">
    <property type="protein sequence ID" value="BAC29621.1"/>
    <property type="molecule type" value="mRNA"/>
</dbReference>
<dbReference type="EMBL" id="AK039615">
    <property type="protein sequence ID" value="BAC30401.1"/>
    <property type="molecule type" value="mRNA"/>
</dbReference>
<dbReference type="EMBL" id="AK054322">
    <property type="protein sequence ID" value="BAC35729.1"/>
    <property type="molecule type" value="mRNA"/>
</dbReference>
<dbReference type="CCDS" id="CCDS40294.1"/>
<dbReference type="BMRB" id="Q8BZ21"/>
<dbReference type="SMR" id="Q8BZ21"/>
<dbReference type="ComplexPortal" id="CPX-800">
    <property type="entry name" value="MOZ1 histone acetyltransferase complex"/>
</dbReference>
<dbReference type="ComplexPortal" id="CPX-801">
    <property type="entry name" value="MOZ2 histone acetyltransferase complex"/>
</dbReference>
<dbReference type="ComplexPortal" id="CPX-802">
    <property type="entry name" value="MOZ3 histone acetyltransferase complex"/>
</dbReference>
<dbReference type="FunCoup" id="Q8BZ21">
    <property type="interactions" value="3445"/>
</dbReference>
<dbReference type="IntAct" id="Q8BZ21">
    <property type="interactions" value="1"/>
</dbReference>
<dbReference type="STRING" id="10090.ENSMUSP00000038181"/>
<dbReference type="BindingDB" id="Q8BZ21"/>
<dbReference type="ChEMBL" id="CHEMBL4523382"/>
<dbReference type="GlyGen" id="Q8BZ21">
    <property type="glycosylation" value="2 sites, 1 O-linked glycan (1 site)"/>
</dbReference>
<dbReference type="iPTMnet" id="Q8BZ21"/>
<dbReference type="PhosphoSitePlus" id="Q8BZ21"/>
<dbReference type="jPOST" id="Q8BZ21"/>
<dbReference type="PaxDb" id="10090-ENSMUSP00000038181"/>
<dbReference type="ProteomicsDB" id="263574"/>
<dbReference type="AGR" id="MGI:2442415"/>
<dbReference type="MGI" id="MGI:2442415">
    <property type="gene designation" value="Kat6a"/>
</dbReference>
<dbReference type="eggNOG" id="KOG2747">
    <property type="taxonomic scope" value="Eukaryota"/>
</dbReference>
<dbReference type="InParanoid" id="Q8BZ21"/>
<dbReference type="PhylomeDB" id="Q8BZ21"/>
<dbReference type="BRENDA" id="2.3.1.48">
    <property type="organism ID" value="3474"/>
</dbReference>
<dbReference type="Reactome" id="R-MMU-3214847">
    <property type="pathway name" value="HATs acetylate histones"/>
</dbReference>
<dbReference type="Reactome" id="R-MMU-6804758">
    <property type="pathway name" value="Regulation of TP53 Activity through Acetylation"/>
</dbReference>
<dbReference type="ChiTaRS" id="Kat6a">
    <property type="organism name" value="mouse"/>
</dbReference>
<dbReference type="PRO" id="PR:Q8BZ21"/>
<dbReference type="Proteomes" id="UP000000589">
    <property type="component" value="Unplaced"/>
</dbReference>
<dbReference type="RNAct" id="Q8BZ21">
    <property type="molecule type" value="protein"/>
</dbReference>
<dbReference type="GO" id="GO:0070776">
    <property type="term" value="C:MOZ/MORF histone acetyltransferase complex"/>
    <property type="evidence" value="ECO:0000250"/>
    <property type="project" value="UniProtKB"/>
</dbReference>
<dbReference type="GO" id="GO:0005730">
    <property type="term" value="C:nucleolus"/>
    <property type="evidence" value="ECO:0007669"/>
    <property type="project" value="UniProtKB-SubCell"/>
</dbReference>
<dbReference type="GO" id="GO:0000786">
    <property type="term" value="C:nucleosome"/>
    <property type="evidence" value="ECO:0007669"/>
    <property type="project" value="InterPro"/>
</dbReference>
<dbReference type="GO" id="GO:0005634">
    <property type="term" value="C:nucleus"/>
    <property type="evidence" value="ECO:0000314"/>
    <property type="project" value="MGI"/>
</dbReference>
<dbReference type="GO" id="GO:0016605">
    <property type="term" value="C:PML body"/>
    <property type="evidence" value="ECO:0000250"/>
    <property type="project" value="UniProtKB"/>
</dbReference>
<dbReference type="GO" id="GO:0003682">
    <property type="term" value="F:chromatin binding"/>
    <property type="evidence" value="ECO:0000316"/>
    <property type="project" value="MGI"/>
</dbReference>
<dbReference type="GO" id="GO:0003677">
    <property type="term" value="F:DNA binding"/>
    <property type="evidence" value="ECO:0000250"/>
    <property type="project" value="UniProtKB"/>
</dbReference>
<dbReference type="GO" id="GO:0036408">
    <property type="term" value="F:histone H3K14 acetyltransferase activity"/>
    <property type="evidence" value="ECO:0000250"/>
    <property type="project" value="UniProtKB"/>
</dbReference>
<dbReference type="GO" id="GO:0043992">
    <property type="term" value="F:histone H3K9 acetyltransferase activity"/>
    <property type="evidence" value="ECO:0000315"/>
    <property type="project" value="MGI"/>
</dbReference>
<dbReference type="GO" id="GO:0043995">
    <property type="term" value="F:histone H4K5 acetyltransferase activity"/>
    <property type="evidence" value="ECO:0000250"/>
    <property type="project" value="UniProtKB"/>
</dbReference>
<dbReference type="GO" id="GO:0008270">
    <property type="term" value="F:zinc ion binding"/>
    <property type="evidence" value="ECO:0000250"/>
    <property type="project" value="UniProtKB"/>
</dbReference>
<dbReference type="GO" id="GO:0035909">
    <property type="term" value="P:aorta morphogenesis"/>
    <property type="evidence" value="ECO:0000315"/>
    <property type="project" value="MGI"/>
</dbReference>
<dbReference type="GO" id="GO:0090398">
    <property type="term" value="P:cellular senescence"/>
    <property type="evidence" value="ECO:0000250"/>
    <property type="project" value="UniProtKB"/>
</dbReference>
<dbReference type="GO" id="GO:0035162">
    <property type="term" value="P:embryonic hemopoiesis"/>
    <property type="evidence" value="ECO:0000315"/>
    <property type="project" value="MGI"/>
</dbReference>
<dbReference type="GO" id="GO:0060325">
    <property type="term" value="P:face morphogenesis"/>
    <property type="evidence" value="ECO:0000315"/>
    <property type="project" value="MGI"/>
</dbReference>
<dbReference type="GO" id="GO:0003007">
    <property type="term" value="P:heart morphogenesis"/>
    <property type="evidence" value="ECO:0000315"/>
    <property type="project" value="MGI"/>
</dbReference>
<dbReference type="GO" id="GO:0030099">
    <property type="term" value="P:myeloid cell differentiation"/>
    <property type="evidence" value="ECO:0000250"/>
    <property type="project" value="UniProtKB"/>
</dbReference>
<dbReference type="GO" id="GO:0045892">
    <property type="term" value="P:negative regulation of DNA-templated transcription"/>
    <property type="evidence" value="ECO:0000250"/>
    <property type="project" value="UniProtKB"/>
</dbReference>
<dbReference type="GO" id="GO:0006334">
    <property type="term" value="P:nucleosome assembly"/>
    <property type="evidence" value="ECO:0007669"/>
    <property type="project" value="InterPro"/>
</dbReference>
<dbReference type="GO" id="GO:0045893">
    <property type="term" value="P:positive regulation of DNA-templated transcription"/>
    <property type="evidence" value="ECO:0000250"/>
    <property type="project" value="UniProtKB"/>
</dbReference>
<dbReference type="GO" id="GO:0006473">
    <property type="term" value="P:protein acetylation"/>
    <property type="evidence" value="ECO:0000250"/>
    <property type="project" value="UniProtKB"/>
</dbReference>
<dbReference type="GO" id="GO:0050793">
    <property type="term" value="P:regulation of developmental process"/>
    <property type="evidence" value="ECO:0000303"/>
    <property type="project" value="ComplexPortal"/>
</dbReference>
<dbReference type="GO" id="GO:0006355">
    <property type="term" value="P:regulation of DNA-templated transcription"/>
    <property type="evidence" value="ECO:0000266"/>
    <property type="project" value="ComplexPortal"/>
</dbReference>
<dbReference type="GO" id="GO:1903706">
    <property type="term" value="P:regulation of hemopoiesis"/>
    <property type="evidence" value="ECO:0000303"/>
    <property type="project" value="ComplexPortal"/>
</dbReference>
<dbReference type="GO" id="GO:0035019">
    <property type="term" value="P:somatic stem cell population maintenance"/>
    <property type="evidence" value="ECO:0000315"/>
    <property type="project" value="MGI"/>
</dbReference>
<dbReference type="CDD" id="cd04301">
    <property type="entry name" value="NAT_SF"/>
    <property type="match status" value="1"/>
</dbReference>
<dbReference type="CDD" id="cd15618">
    <property type="entry name" value="PHD1_MOZ_MORF"/>
    <property type="match status" value="1"/>
</dbReference>
<dbReference type="CDD" id="cd15527">
    <property type="entry name" value="PHD2_KAT6A_6B"/>
    <property type="match status" value="1"/>
</dbReference>
<dbReference type="FunFam" id="1.10.10.10:FF:000123">
    <property type="entry name" value="Histone acetyltransferase"/>
    <property type="match status" value="1"/>
</dbReference>
<dbReference type="FunFam" id="1.10.10.10:FF:000132">
    <property type="entry name" value="Histone acetyltransferase"/>
    <property type="match status" value="1"/>
</dbReference>
<dbReference type="FunFam" id="3.30.40.10:FF:000035">
    <property type="entry name" value="Histone acetyltransferase"/>
    <property type="match status" value="1"/>
</dbReference>
<dbReference type="FunFam" id="3.30.60.60:FF:000002">
    <property type="entry name" value="Histone acetyltransferase"/>
    <property type="match status" value="1"/>
</dbReference>
<dbReference type="FunFam" id="3.40.630.30:FF:000001">
    <property type="entry name" value="Histone acetyltransferase"/>
    <property type="match status" value="1"/>
</dbReference>
<dbReference type="Gene3D" id="3.40.630.30">
    <property type="match status" value="1"/>
</dbReference>
<dbReference type="Gene3D" id="3.30.60.60">
    <property type="entry name" value="N-acetyl transferase-like"/>
    <property type="match status" value="1"/>
</dbReference>
<dbReference type="Gene3D" id="1.10.10.10">
    <property type="entry name" value="Winged helix-like DNA-binding domain superfamily/Winged helix DNA-binding domain"/>
    <property type="match status" value="2"/>
</dbReference>
<dbReference type="Gene3D" id="3.30.40.10">
    <property type="entry name" value="Zinc/RING finger domain, C3HC4 (zinc finger)"/>
    <property type="match status" value="1"/>
</dbReference>
<dbReference type="InterPro" id="IPR016181">
    <property type="entry name" value="Acyl_CoA_acyltransferase"/>
</dbReference>
<dbReference type="InterPro" id="IPR002717">
    <property type="entry name" value="HAT_MYST-type"/>
</dbReference>
<dbReference type="InterPro" id="IPR005818">
    <property type="entry name" value="Histone_H1/H5_H15"/>
</dbReference>
<dbReference type="InterPro" id="IPR050603">
    <property type="entry name" value="MYST_HAT"/>
</dbReference>
<dbReference type="InterPro" id="IPR048589">
    <property type="entry name" value="SAMD1-like_WH"/>
</dbReference>
<dbReference type="InterPro" id="IPR036388">
    <property type="entry name" value="WH-like_DNA-bd_sf"/>
</dbReference>
<dbReference type="InterPro" id="IPR036390">
    <property type="entry name" value="WH_DNA-bd_sf"/>
</dbReference>
<dbReference type="InterPro" id="IPR040706">
    <property type="entry name" value="Zf-MYST"/>
</dbReference>
<dbReference type="InterPro" id="IPR011011">
    <property type="entry name" value="Znf_FYVE_PHD"/>
</dbReference>
<dbReference type="InterPro" id="IPR001965">
    <property type="entry name" value="Znf_PHD"/>
</dbReference>
<dbReference type="InterPro" id="IPR019787">
    <property type="entry name" value="Znf_PHD-finger"/>
</dbReference>
<dbReference type="InterPro" id="IPR013083">
    <property type="entry name" value="Znf_RING/FYVE/PHD"/>
</dbReference>
<dbReference type="PANTHER" id="PTHR10615">
    <property type="entry name" value="HISTONE ACETYLTRANSFERASE"/>
    <property type="match status" value="1"/>
</dbReference>
<dbReference type="PANTHER" id="PTHR10615:SF26">
    <property type="entry name" value="HISTONE ACETYLTRANSFERASE KAT6A"/>
    <property type="match status" value="1"/>
</dbReference>
<dbReference type="Pfam" id="PF01853">
    <property type="entry name" value="MOZ_SAS"/>
    <property type="match status" value="1"/>
</dbReference>
<dbReference type="Pfam" id="PF00628">
    <property type="entry name" value="PHD"/>
    <property type="match status" value="2"/>
</dbReference>
<dbReference type="Pfam" id="PF21524">
    <property type="entry name" value="SAMD1_WH"/>
    <property type="match status" value="1"/>
</dbReference>
<dbReference type="Pfam" id="PF17772">
    <property type="entry name" value="zf-MYST"/>
    <property type="match status" value="1"/>
</dbReference>
<dbReference type="SMART" id="SM00526">
    <property type="entry name" value="H15"/>
    <property type="match status" value="1"/>
</dbReference>
<dbReference type="SMART" id="SM00249">
    <property type="entry name" value="PHD"/>
    <property type="match status" value="2"/>
</dbReference>
<dbReference type="SUPFAM" id="SSF55729">
    <property type="entry name" value="Acyl-CoA N-acyltransferases (Nat)"/>
    <property type="match status" value="1"/>
</dbReference>
<dbReference type="SUPFAM" id="SSF57903">
    <property type="entry name" value="FYVE/PHD zinc finger"/>
    <property type="match status" value="2"/>
</dbReference>
<dbReference type="SUPFAM" id="SSF46785">
    <property type="entry name" value="Winged helix' DNA-binding domain"/>
    <property type="match status" value="1"/>
</dbReference>
<dbReference type="PROSITE" id="PS51504">
    <property type="entry name" value="H15"/>
    <property type="match status" value="1"/>
</dbReference>
<dbReference type="PROSITE" id="PS51726">
    <property type="entry name" value="MYST_HAT"/>
    <property type="match status" value="1"/>
</dbReference>
<dbReference type="PROSITE" id="PS52014">
    <property type="entry name" value="SAMD1_WH"/>
    <property type="match status" value="1"/>
</dbReference>
<dbReference type="PROSITE" id="PS01359">
    <property type="entry name" value="ZF_PHD_1"/>
    <property type="match status" value="1"/>
</dbReference>
<dbReference type="PROSITE" id="PS50016">
    <property type="entry name" value="ZF_PHD_2"/>
    <property type="match status" value="2"/>
</dbReference>
<name>KAT6A_MOUSE</name>
<comment type="function">
    <text evidence="3 10">Histone acetyltransferase that acetylates lysine residues in histone H3 and histone H4 (in vitro). Component of the MOZ/MORF complex which has a histone H3 acetyltransferase activity. May act as a transcriptional coactivator for RUNX1 and RUNX2 (By similarity). Acetylates p53/TP53 at 'Lys-120' and 'Lys-382' and controls its transcriptional activity via association with PML (By similarity).</text>
</comment>
<comment type="catalytic activity">
    <reaction evidence="3">
        <text>L-lysyl-[protein] + acetyl-CoA = N(6)-acetyl-L-lysyl-[protein] + CoA + H(+)</text>
        <dbReference type="Rhea" id="RHEA:45948"/>
        <dbReference type="Rhea" id="RHEA-COMP:9752"/>
        <dbReference type="Rhea" id="RHEA-COMP:10731"/>
        <dbReference type="ChEBI" id="CHEBI:15378"/>
        <dbReference type="ChEBI" id="CHEBI:29969"/>
        <dbReference type="ChEBI" id="CHEBI:57287"/>
        <dbReference type="ChEBI" id="CHEBI:57288"/>
        <dbReference type="ChEBI" id="CHEBI:61930"/>
        <dbReference type="EC" id="2.3.1.48"/>
    </reaction>
</comment>
<comment type="subunit">
    <text evidence="3">Component of the MOZ/MORF complex composed at least of ING5, KAT6A, KAT6B, MEAF6 and one of BRPF1, BRD1/BRPF2 and BRPF3 (By similarity). Interacts with RUNX2 (By similarity). Interacts with RUNX1; phosphorylation of RUNX1 enhances the interaction. Interacts with p53/TP53 (By similarity). Interacts with PML and this interaction positively regulates its acetylation activity towards p53/TP53 (By similarity).</text>
</comment>
<comment type="subcellular location">
    <subcellularLocation>
        <location evidence="6">Nucleus</location>
    </subcellularLocation>
    <subcellularLocation>
        <location evidence="3">Nucleus</location>
        <location evidence="3">Nucleolus</location>
    </subcellularLocation>
    <subcellularLocation>
        <location evidence="3">Nucleus</location>
        <location evidence="3">Nucleoplasm</location>
    </subcellularLocation>
    <subcellularLocation>
        <location evidence="3">Nucleus</location>
        <location evidence="3">PML body</location>
    </subcellularLocation>
    <text evidence="3">Recruited into PML body after DNA damage.</text>
</comment>
<comment type="domain">
    <text evidence="1">The N-terminus is involved in transcriptional activation while the C-terminus is involved in transcriptional repression.</text>
</comment>
<comment type="PTM">
    <text evidence="4">Autoacetylated. Autoacetylation at Lys-603 is required for proper function.</text>
</comment>
<comment type="PTM">
    <text evidence="1">Phosphorylation at Thr-369 by PKB/AKT1 inhibits its interaction with PML and negatively regulates its acetylation activity towards p53/TP53.</text>
</comment>
<comment type="similarity">
    <text evidence="11">Belongs to the MYST (SAS/MOZ) family.</text>
</comment>